<accession>Q43295</accession>
<accession>Q8LES2</accession>
<feature type="transit peptide" description="Chloroplast" evidence="2">
    <location>
        <begin position="1"/>
        <end position="38"/>
    </location>
</feature>
<feature type="chain" id="PRO_0000006635" description="Adenylyl-sulfate kinase 1, chloroplastic">
    <location>
        <begin position="39"/>
        <end position="276"/>
    </location>
</feature>
<feature type="region of interest" description="Disordered" evidence="3">
    <location>
        <begin position="46"/>
        <end position="74"/>
    </location>
</feature>
<feature type="compositionally biased region" description="Polar residues" evidence="3">
    <location>
        <begin position="62"/>
        <end position="74"/>
    </location>
</feature>
<feature type="active site" description="Phosphoserine intermediate" evidence="1">
    <location>
        <position position="182"/>
    </location>
</feature>
<feature type="binding site" evidence="7">
    <location>
        <begin position="108"/>
        <end position="116"/>
    </location>
    <ligand>
        <name>ATP</name>
        <dbReference type="ChEBI" id="CHEBI:30616"/>
    </ligand>
</feature>
<feature type="binding site" evidence="7 8">
    <location>
        <position position="138"/>
    </location>
    <ligand>
        <name>substrate</name>
    </ligand>
</feature>
<feature type="binding site" evidence="7 8">
    <location>
        <position position="141"/>
    </location>
    <ligand>
        <name>substrate</name>
    </ligand>
</feature>
<feature type="binding site" evidence="7 8">
    <location>
        <position position="155"/>
    </location>
    <ligand>
        <name>substrate</name>
    </ligand>
</feature>
<feature type="binding site" evidence="7 8">
    <location>
        <position position="158"/>
    </location>
    <ligand>
        <name>substrate</name>
    </ligand>
</feature>
<feature type="binding site">
    <location>
        <begin position="181"/>
        <end position="182"/>
    </location>
    <ligand>
        <name>substrate</name>
    </ligand>
</feature>
<feature type="binding site" evidence="7 8">
    <location>
        <position position="231"/>
    </location>
    <ligand>
        <name>substrate</name>
    </ligand>
</feature>
<feature type="site" description="Participates in a stacking interaction with the adenine ring of adenylyl-sulfate">
    <location>
        <position position="150"/>
    </location>
</feature>
<feature type="disulfide bond" description="Interchain (with C-119)" evidence="7">
    <location>
        <position position="86"/>
    </location>
</feature>
<feature type="disulfide bond" description="Interchain (with C-86)" evidence="7">
    <location>
        <position position="119"/>
    </location>
</feature>
<feature type="mutagenesis site" description="Increased catalytic efficiency in oxidative conditions; when associated with Ala-119." evidence="7">
    <original>C</original>
    <variation>A</variation>
    <location>
        <position position="86"/>
    </location>
</feature>
<feature type="mutagenesis site" description="Increased catalytic efficiency in oxidative conditions; when associated with Ala-86." evidence="7">
    <original>C</original>
    <variation>A</variation>
    <location>
        <position position="119"/>
    </location>
</feature>
<feature type="mutagenesis site" description="Decreases affinity for substrate and catalytic efficiency." evidence="8">
    <original>D</original>
    <variation>A</variation>
    <variation>N</variation>
    <location>
        <position position="136"/>
    </location>
</feature>
<feature type="mutagenesis site" description="No effect on catalytic activity." evidence="4">
    <original>S</original>
    <variation>C</variation>
    <variation>F</variation>
    <location>
        <position position="182"/>
    </location>
</feature>
<feature type="sequence conflict" description="In Ref. 7; AAM62496." evidence="13" ref="7">
    <original>M</original>
    <variation>I</variation>
    <location>
        <position position="41"/>
    </location>
</feature>
<feature type="helix" evidence="15">
    <location>
        <begin position="90"/>
        <end position="97"/>
    </location>
</feature>
<feature type="strand" evidence="15">
    <location>
        <begin position="102"/>
        <end position="107"/>
    </location>
</feature>
<feature type="helix" evidence="15">
    <location>
        <begin position="114"/>
        <end position="127"/>
    </location>
</feature>
<feature type="strand" evidence="15">
    <location>
        <begin position="132"/>
        <end position="136"/>
    </location>
</feature>
<feature type="helix" evidence="15">
    <location>
        <begin position="137"/>
        <end position="140"/>
    </location>
</feature>
<feature type="turn" evidence="15">
    <location>
        <begin position="141"/>
        <end position="147"/>
    </location>
</feature>
<feature type="helix" evidence="15">
    <location>
        <begin position="152"/>
        <end position="171"/>
    </location>
</feature>
<feature type="strand" evidence="15">
    <location>
        <begin position="175"/>
        <end position="179"/>
    </location>
</feature>
<feature type="helix" evidence="15">
    <location>
        <begin position="185"/>
        <end position="193"/>
    </location>
</feature>
<feature type="strand" evidence="15">
    <location>
        <begin position="199"/>
        <end position="205"/>
    </location>
</feature>
<feature type="helix" evidence="15">
    <location>
        <begin position="209"/>
        <end position="215"/>
    </location>
</feature>
<feature type="helix" evidence="15">
    <location>
        <begin position="220"/>
        <end position="225"/>
    </location>
</feature>
<feature type="turn" evidence="15">
    <location>
        <begin position="233"/>
        <end position="235"/>
    </location>
</feature>
<feature type="strand" evidence="15">
    <location>
        <begin position="246"/>
        <end position="249"/>
    </location>
</feature>
<feature type="helix" evidence="15">
    <location>
        <begin position="257"/>
        <end position="271"/>
    </location>
</feature>
<feature type="turn" evidence="15">
    <location>
        <begin position="272"/>
        <end position="274"/>
    </location>
</feature>
<organism>
    <name type="scientific">Arabidopsis thaliana</name>
    <name type="common">Mouse-ear cress</name>
    <dbReference type="NCBI Taxonomy" id="3702"/>
    <lineage>
        <taxon>Eukaryota</taxon>
        <taxon>Viridiplantae</taxon>
        <taxon>Streptophyta</taxon>
        <taxon>Embryophyta</taxon>
        <taxon>Tracheophyta</taxon>
        <taxon>Spermatophyta</taxon>
        <taxon>Magnoliopsida</taxon>
        <taxon>eudicotyledons</taxon>
        <taxon>Gunneridae</taxon>
        <taxon>Pentapetalae</taxon>
        <taxon>rosids</taxon>
        <taxon>malvids</taxon>
        <taxon>Brassicales</taxon>
        <taxon>Brassicaceae</taxon>
        <taxon>Camelineae</taxon>
        <taxon>Arabidopsis</taxon>
    </lineage>
</organism>
<protein>
    <recommendedName>
        <fullName>Adenylyl-sulfate kinase 1, chloroplastic</fullName>
        <ecNumber evidence="14">2.7.1.25</ecNumber>
    </recommendedName>
    <alternativeName>
        <fullName>ATP adenosine-5'-phosphosulfate 3'-phosphotransferase 1</fullName>
    </alternativeName>
    <alternativeName>
        <fullName evidence="12">Adenosine-5'-phosphosulfate kinase 1</fullName>
        <shortName evidence="11">APS kinase 1</shortName>
    </alternativeName>
</protein>
<comment type="function">
    <text evidence="4 5 6 9 10">Catalyzes the synthesis of activated sulfate. Essential for plant reproduction and viability. Required for the production of glucosinolates.</text>
</comment>
<comment type="catalytic activity">
    <reaction evidence="14">
        <text>adenosine 5'-phosphosulfate + ATP = 3'-phosphoadenylyl sulfate + ADP + H(+)</text>
        <dbReference type="Rhea" id="RHEA:24152"/>
        <dbReference type="ChEBI" id="CHEBI:15378"/>
        <dbReference type="ChEBI" id="CHEBI:30616"/>
        <dbReference type="ChEBI" id="CHEBI:58243"/>
        <dbReference type="ChEBI" id="CHEBI:58339"/>
        <dbReference type="ChEBI" id="CHEBI:456216"/>
        <dbReference type="EC" id="2.7.1.25"/>
    </reaction>
    <physiologicalReaction direction="left-to-right" evidence="14">
        <dbReference type="Rhea" id="RHEA:24153"/>
    </physiologicalReaction>
</comment>
<comment type="biophysicochemical properties">
    <kinetics>
        <KM evidence="4">0.14 uM for adenosine 5'-phosphosulfate</KM>
        <KM evidence="5">5.3 uM for adenosine 5'-phosphosulfate</KM>
        <KM evidence="4">147 uM for ATP</KM>
        <Vmax evidence="4">7.35 mmol/min/mg enzyme</Vmax>
        <Vmax evidence="5">20.1 mmol/min/mg enzyme</Vmax>
    </kinetics>
</comment>
<comment type="pathway">
    <text>Sulfur metabolism; hydrogen sulfide biosynthesis; sulfite from sulfate: step 2/3.</text>
</comment>
<comment type="subunit">
    <text evidence="4 7 8">Homodimer; disulfide-linked. Interacts with APK2.</text>
</comment>
<comment type="interaction">
    <interactant intactId="EBI-4438040">
        <id>Q43295</id>
    </interactant>
    <interactant intactId="EBI-4438040">
        <id>Q43295</id>
        <label>APK1</label>
    </interactant>
    <organismsDiffer>false</organismsDiffer>
    <experiments>3</experiments>
</comment>
<comment type="subcellular location">
    <subcellularLocation>
        <location evidence="5">Plastid</location>
        <location evidence="5">Chloroplast</location>
    </subcellularLocation>
</comment>
<comment type="tissue specificity">
    <text evidence="5">Expressed in root vasculature, root tips, leaf epidermal and guard cells, pollen grains and funiculus of developing seeds.</text>
</comment>
<comment type="disruption phenotype">
    <text evidence="5 6">No visible phenotype under normal growth conditions. Apk1 and apk2 double mutant exhibits a semi-dwarf phenotype.</text>
</comment>
<comment type="similarity">
    <text evidence="13">Belongs to the APS kinase family.</text>
</comment>
<keyword id="KW-0002">3D-structure</keyword>
<keyword id="KW-0028">Amino-acid biosynthesis</keyword>
<keyword id="KW-0067">ATP-binding</keyword>
<keyword id="KW-0150">Chloroplast</keyword>
<keyword id="KW-0198">Cysteine biosynthesis</keyword>
<keyword id="KW-1015">Disulfide bond</keyword>
<keyword id="KW-0418">Kinase</keyword>
<keyword id="KW-0547">Nucleotide-binding</keyword>
<keyword id="KW-0934">Plastid</keyword>
<keyword id="KW-1185">Reference proteome</keyword>
<keyword id="KW-0808">Transferase</keyword>
<keyword id="KW-0809">Transit peptide</keyword>
<gene>
    <name type="primary">APK1</name>
    <name evidence="11" type="synonym">AKN1</name>
    <name type="ordered locus">At2g14750</name>
    <name type="ORF">F26C24.11</name>
    <name type="ORF">T6B13.1</name>
</gene>
<dbReference type="EC" id="2.7.1.25" evidence="14"/>
<dbReference type="EMBL" id="X75782">
    <property type="protein sequence ID" value="CAA53426.1"/>
    <property type="molecule type" value="mRNA"/>
</dbReference>
<dbReference type="EMBL" id="U05238">
    <property type="protein sequence ID" value="AAC50035.1"/>
    <property type="molecule type" value="mRNA"/>
</dbReference>
<dbReference type="EMBL" id="U59759">
    <property type="protein sequence ID" value="AAC50034.1"/>
    <property type="molecule type" value="Genomic_DNA"/>
</dbReference>
<dbReference type="EMBL" id="AC004705">
    <property type="protein sequence ID" value="AAC24182.1"/>
    <property type="molecule type" value="Genomic_DNA"/>
</dbReference>
<dbReference type="EMBL" id="CP002685">
    <property type="protein sequence ID" value="AEC06330.1"/>
    <property type="molecule type" value="Genomic_DNA"/>
</dbReference>
<dbReference type="EMBL" id="AY054287">
    <property type="protein sequence ID" value="AAL06946.1"/>
    <property type="molecule type" value="mRNA"/>
</dbReference>
<dbReference type="EMBL" id="AY132010">
    <property type="protein sequence ID" value="AAM91043.1"/>
    <property type="molecule type" value="mRNA"/>
</dbReference>
<dbReference type="EMBL" id="AY085264">
    <property type="protein sequence ID" value="AAM62496.1"/>
    <property type="molecule type" value="mRNA"/>
</dbReference>
<dbReference type="PIR" id="S47640">
    <property type="entry name" value="S47640"/>
</dbReference>
<dbReference type="PDB" id="3UIE">
    <property type="method" value="X-ray"/>
    <property type="resolution" value="1.79 A"/>
    <property type="chains" value="A/B/C=77-276"/>
</dbReference>
<dbReference type="PDB" id="4FXP">
    <property type="method" value="X-ray"/>
    <property type="resolution" value="1.95 A"/>
    <property type="chains" value="A/B/C=77-276"/>
</dbReference>
<dbReference type="PDBsum" id="3UIE"/>
<dbReference type="PDBsum" id="4FXP"/>
<dbReference type="SMR" id="Q43295"/>
<dbReference type="DIP" id="DIP-60003N"/>
<dbReference type="FunCoup" id="Q43295">
    <property type="interactions" value="65"/>
</dbReference>
<dbReference type="IntAct" id="Q43295">
    <property type="interactions" value="2"/>
</dbReference>
<dbReference type="STRING" id="3702.Q43295"/>
<dbReference type="iPTMnet" id="Q43295"/>
<dbReference type="PaxDb" id="3702-AT2G14750.1"/>
<dbReference type="ProteomicsDB" id="240608"/>
<dbReference type="EnsemblPlants" id="AT2G14750.1">
    <property type="protein sequence ID" value="AT2G14750.1"/>
    <property type="gene ID" value="AT2G14750"/>
</dbReference>
<dbReference type="GeneID" id="815963"/>
<dbReference type="Gramene" id="AT2G14750.1">
    <property type="protein sequence ID" value="AT2G14750.1"/>
    <property type="gene ID" value="AT2G14750"/>
</dbReference>
<dbReference type="KEGG" id="ath:AT2G14750"/>
<dbReference type="Araport" id="AT2G14750"/>
<dbReference type="TAIR" id="AT2G14750">
    <property type="gene designation" value="APK"/>
</dbReference>
<dbReference type="eggNOG" id="KOG0635">
    <property type="taxonomic scope" value="Eukaryota"/>
</dbReference>
<dbReference type="HOGENOM" id="CLU_046932_0_2_1"/>
<dbReference type="InParanoid" id="Q43295"/>
<dbReference type="OMA" id="STNIQWH"/>
<dbReference type="PhylomeDB" id="Q43295"/>
<dbReference type="BioCyc" id="ARA:AT2G14750-MONOMER"/>
<dbReference type="BioCyc" id="MetaCyc:AT2G14750-MONOMER"/>
<dbReference type="BRENDA" id="2.7.1.25">
    <property type="organism ID" value="399"/>
</dbReference>
<dbReference type="SABIO-RK" id="Q43295"/>
<dbReference type="UniPathway" id="UPA00140">
    <property type="reaction ID" value="UER00205"/>
</dbReference>
<dbReference type="EvolutionaryTrace" id="Q43295"/>
<dbReference type="PRO" id="PR:Q43295"/>
<dbReference type="Proteomes" id="UP000006548">
    <property type="component" value="Chromosome 2"/>
</dbReference>
<dbReference type="ExpressionAtlas" id="Q43295">
    <property type="expression patterns" value="baseline and differential"/>
</dbReference>
<dbReference type="GO" id="GO:0009507">
    <property type="term" value="C:chloroplast"/>
    <property type="evidence" value="ECO:0000314"/>
    <property type="project" value="TAIR"/>
</dbReference>
<dbReference type="GO" id="GO:0009536">
    <property type="term" value="C:plastid"/>
    <property type="evidence" value="ECO:0000304"/>
    <property type="project" value="TAIR"/>
</dbReference>
<dbReference type="GO" id="GO:0004020">
    <property type="term" value="F:adenylylsulfate kinase activity"/>
    <property type="evidence" value="ECO:0000314"/>
    <property type="project" value="TAIR"/>
</dbReference>
<dbReference type="GO" id="GO:0005524">
    <property type="term" value="F:ATP binding"/>
    <property type="evidence" value="ECO:0007669"/>
    <property type="project" value="UniProtKB-KW"/>
</dbReference>
<dbReference type="GO" id="GO:0042802">
    <property type="term" value="F:identical protein binding"/>
    <property type="evidence" value="ECO:0000353"/>
    <property type="project" value="IntAct"/>
</dbReference>
<dbReference type="GO" id="GO:0019344">
    <property type="term" value="P:cysteine biosynthetic process"/>
    <property type="evidence" value="ECO:0007669"/>
    <property type="project" value="UniProtKB-KW"/>
</dbReference>
<dbReference type="GO" id="GO:0070814">
    <property type="term" value="P:hydrogen sulfide biosynthetic process"/>
    <property type="evidence" value="ECO:0007669"/>
    <property type="project" value="UniProtKB-UniPathway"/>
</dbReference>
<dbReference type="GO" id="GO:0016310">
    <property type="term" value="P:phosphorylation"/>
    <property type="evidence" value="ECO:0000314"/>
    <property type="project" value="TAIR"/>
</dbReference>
<dbReference type="GO" id="GO:0000103">
    <property type="term" value="P:sulfate assimilation"/>
    <property type="evidence" value="ECO:0007669"/>
    <property type="project" value="InterPro"/>
</dbReference>
<dbReference type="CDD" id="cd02027">
    <property type="entry name" value="APSK"/>
    <property type="match status" value="1"/>
</dbReference>
<dbReference type="FunFam" id="3.40.50.300:FF:000629">
    <property type="entry name" value="Adenylyl-sulfate kinase"/>
    <property type="match status" value="1"/>
</dbReference>
<dbReference type="Gene3D" id="3.40.50.300">
    <property type="entry name" value="P-loop containing nucleotide triphosphate hydrolases"/>
    <property type="match status" value="1"/>
</dbReference>
<dbReference type="HAMAP" id="MF_00065">
    <property type="entry name" value="Adenylyl_sulf_kinase"/>
    <property type="match status" value="1"/>
</dbReference>
<dbReference type="InterPro" id="IPR002891">
    <property type="entry name" value="APS_kinase"/>
</dbReference>
<dbReference type="InterPro" id="IPR027417">
    <property type="entry name" value="P-loop_NTPase"/>
</dbReference>
<dbReference type="NCBIfam" id="TIGR00455">
    <property type="entry name" value="apsK"/>
    <property type="match status" value="1"/>
</dbReference>
<dbReference type="NCBIfam" id="NF003013">
    <property type="entry name" value="PRK03846.1"/>
    <property type="match status" value="1"/>
</dbReference>
<dbReference type="PANTHER" id="PTHR11055:SF63">
    <property type="entry name" value="ADENYLYL-SULFATE KINASE 1, CHLOROPLASTIC"/>
    <property type="match status" value="1"/>
</dbReference>
<dbReference type="PANTHER" id="PTHR11055">
    <property type="entry name" value="BIFUNCTIONAL 3'-PHOSPHOADENOSINE 5'-PHOSPHOSULFATE SYNTHASE"/>
    <property type="match status" value="1"/>
</dbReference>
<dbReference type="Pfam" id="PF01583">
    <property type="entry name" value="APS_kinase"/>
    <property type="match status" value="1"/>
</dbReference>
<dbReference type="SUPFAM" id="SSF52540">
    <property type="entry name" value="P-loop containing nucleoside triphosphate hydrolases"/>
    <property type="match status" value="1"/>
</dbReference>
<proteinExistence type="evidence at protein level"/>
<reference key="1">
    <citation type="journal article" date="1994" name="Biochim. Biophys. Acta">
        <title>A cDNA for adenylyl sulphate (APS)-kinase from Arabidopsis thaliana.</title>
        <authorList>
            <person name="Arz H.E."/>
            <person name="Gisselmann G."/>
            <person name="Schiffmann S."/>
            <person name="Schwenn J.-D."/>
        </authorList>
    </citation>
    <scope>NUCLEOTIDE SEQUENCE [MRNA]</scope>
    <source>
        <strain>cv. Columbia</strain>
        <tissue>Leaf</tissue>
    </source>
</reference>
<reference key="2">
    <citation type="journal article" date="1994" name="Plant Physiol.">
        <title>A cDNA clone for 5'-adenylylphosphosulfate kinase from Arabidopsis thaliana.</title>
        <authorList>
            <person name="Jain A."/>
            <person name="Leustek T."/>
        </authorList>
    </citation>
    <scope>NUCLEOTIDE SEQUENCE [MRNA]</scope>
</reference>
<reference key="3">
    <citation type="journal article" date="1998" name="Biochem. Biophys. Res. Commun.">
        <title>APS kinase from Arabidopsis thaliana: genomic organization, expression, and kinetic analysis of the recombinant enzyme.</title>
        <authorList>
            <person name="Lee S."/>
            <person name="Leustek T."/>
        </authorList>
    </citation>
    <scope>NUCLEOTIDE SEQUENCE [GENOMIC DNA]</scope>
    <source>
        <strain>cv. Landsberg erecta</strain>
    </source>
</reference>
<reference key="4">
    <citation type="journal article" date="1999" name="Nature">
        <title>Sequence and analysis of chromosome 2 of the plant Arabidopsis thaliana.</title>
        <authorList>
            <person name="Lin X."/>
            <person name="Kaul S."/>
            <person name="Rounsley S.D."/>
            <person name="Shea T.P."/>
            <person name="Benito M.-I."/>
            <person name="Town C.D."/>
            <person name="Fujii C.Y."/>
            <person name="Mason T.M."/>
            <person name="Bowman C.L."/>
            <person name="Barnstead M.E."/>
            <person name="Feldblyum T.V."/>
            <person name="Buell C.R."/>
            <person name="Ketchum K.A."/>
            <person name="Lee J.J."/>
            <person name="Ronning C.M."/>
            <person name="Koo H.L."/>
            <person name="Moffat K.S."/>
            <person name="Cronin L.A."/>
            <person name="Shen M."/>
            <person name="Pai G."/>
            <person name="Van Aken S."/>
            <person name="Umayam L."/>
            <person name="Tallon L.J."/>
            <person name="Gill J.E."/>
            <person name="Adams M.D."/>
            <person name="Carrera A.J."/>
            <person name="Creasy T.H."/>
            <person name="Goodman H.M."/>
            <person name="Somerville C.R."/>
            <person name="Copenhaver G.P."/>
            <person name="Preuss D."/>
            <person name="Nierman W.C."/>
            <person name="White O."/>
            <person name="Eisen J.A."/>
            <person name="Salzberg S.L."/>
            <person name="Fraser C.M."/>
            <person name="Venter J.C."/>
        </authorList>
    </citation>
    <scope>NUCLEOTIDE SEQUENCE [LARGE SCALE GENOMIC DNA]</scope>
    <source>
        <strain>cv. Columbia</strain>
    </source>
</reference>
<reference key="5">
    <citation type="journal article" date="2017" name="Plant J.">
        <title>Araport11: a complete reannotation of the Arabidopsis thaliana reference genome.</title>
        <authorList>
            <person name="Cheng C.Y."/>
            <person name="Krishnakumar V."/>
            <person name="Chan A.P."/>
            <person name="Thibaud-Nissen F."/>
            <person name="Schobel S."/>
            <person name="Town C.D."/>
        </authorList>
    </citation>
    <scope>GENOME REANNOTATION</scope>
    <source>
        <strain>cv. Columbia</strain>
    </source>
</reference>
<reference key="6">
    <citation type="journal article" date="2003" name="Science">
        <title>Empirical analysis of transcriptional activity in the Arabidopsis genome.</title>
        <authorList>
            <person name="Yamada K."/>
            <person name="Lim J."/>
            <person name="Dale J.M."/>
            <person name="Chen H."/>
            <person name="Shinn P."/>
            <person name="Palm C.J."/>
            <person name="Southwick A.M."/>
            <person name="Wu H.C."/>
            <person name="Kim C.J."/>
            <person name="Nguyen M."/>
            <person name="Pham P.K."/>
            <person name="Cheuk R.F."/>
            <person name="Karlin-Newmann G."/>
            <person name="Liu S.X."/>
            <person name="Lam B."/>
            <person name="Sakano H."/>
            <person name="Wu T."/>
            <person name="Yu G."/>
            <person name="Miranda M."/>
            <person name="Quach H.L."/>
            <person name="Tripp M."/>
            <person name="Chang C.H."/>
            <person name="Lee J.M."/>
            <person name="Toriumi M.J."/>
            <person name="Chan M.M."/>
            <person name="Tang C.C."/>
            <person name="Onodera C.S."/>
            <person name="Deng J.M."/>
            <person name="Akiyama K."/>
            <person name="Ansari Y."/>
            <person name="Arakawa T."/>
            <person name="Banh J."/>
            <person name="Banno F."/>
            <person name="Bowser L."/>
            <person name="Brooks S.Y."/>
            <person name="Carninci P."/>
            <person name="Chao Q."/>
            <person name="Choy N."/>
            <person name="Enju A."/>
            <person name="Goldsmith A.D."/>
            <person name="Gurjal M."/>
            <person name="Hansen N.F."/>
            <person name="Hayashizaki Y."/>
            <person name="Johnson-Hopson C."/>
            <person name="Hsuan V.W."/>
            <person name="Iida K."/>
            <person name="Karnes M."/>
            <person name="Khan S."/>
            <person name="Koesema E."/>
            <person name="Ishida J."/>
            <person name="Jiang P.X."/>
            <person name="Jones T."/>
            <person name="Kawai J."/>
            <person name="Kamiya A."/>
            <person name="Meyers C."/>
            <person name="Nakajima M."/>
            <person name="Narusaka M."/>
            <person name="Seki M."/>
            <person name="Sakurai T."/>
            <person name="Satou M."/>
            <person name="Tamse R."/>
            <person name="Vaysberg M."/>
            <person name="Wallender E.K."/>
            <person name="Wong C."/>
            <person name="Yamamura Y."/>
            <person name="Yuan S."/>
            <person name="Shinozaki K."/>
            <person name="Davis R.W."/>
            <person name="Theologis A."/>
            <person name="Ecker J.R."/>
        </authorList>
    </citation>
    <scope>NUCLEOTIDE SEQUENCE [LARGE SCALE MRNA]</scope>
    <source>
        <strain>cv. Columbia</strain>
    </source>
</reference>
<reference key="7">
    <citation type="submission" date="2002-03" db="EMBL/GenBank/DDBJ databases">
        <title>Full-length cDNA from Arabidopsis thaliana.</title>
        <authorList>
            <person name="Brover V.V."/>
            <person name="Troukhan M.E."/>
            <person name="Alexandrov N.A."/>
            <person name="Lu Y.-P."/>
            <person name="Flavell R.B."/>
            <person name="Feldmann K.A."/>
        </authorList>
    </citation>
    <scope>NUCLEOTIDE SEQUENCE [LARGE SCALE MRNA]</scope>
</reference>
<reference key="8">
    <citation type="journal article" date="1994" name="FEBS Lett.">
        <title>APS-sulfotransferase activity is identical to higher plant APS-kinase (EC 2.7.1.25).</title>
        <authorList>
            <person name="Schiffmann S."/>
            <person name="Schwenn J.D."/>
        </authorList>
    </citation>
    <scope>FUNCTION</scope>
</reference>
<reference key="9">
    <citation type="journal article" date="2001" name="Arch. Biochem. Biophys.">
        <title>Molecular and catalytic properties of Arabidopsis thaliana adenylyl sulfate (APS)-kinase.</title>
        <authorList>
            <person name="Lillig C.H."/>
            <person name="Schiffmann S."/>
            <person name="Berndt C."/>
            <person name="Berken A."/>
            <person name="Tischka R."/>
            <person name="Schwenn J.D."/>
        </authorList>
    </citation>
    <scope>FUNCTION</scope>
    <scope>CATALYTIC ACTIVITY</scope>
    <scope>BIOPHYSICOCHEMICAL PROPERTIES</scope>
    <scope>INTERACTION WITH AKN2</scope>
    <scope>MUTAGENESIS OF SER-182</scope>
</reference>
<reference key="10">
    <citation type="journal article" date="2009" name="Plant Cell">
        <title>Disruption of adenosine-5'-phosphosulfate kinase in Arabidopsis reduces levels of sulfated secondary metabolites.</title>
        <authorList>
            <person name="Mugford S.G."/>
            <person name="Yoshimoto N."/>
            <person name="Reichelt M."/>
            <person name="Wirtz M."/>
            <person name="Hill L."/>
            <person name="Mugford S.T."/>
            <person name="Nakazato Y."/>
            <person name="Noji M."/>
            <person name="Takahashi H."/>
            <person name="Kramell R."/>
            <person name="Gigolashvili T."/>
            <person name="Fluegge U.I."/>
            <person name="Wasternack C."/>
            <person name="Gershenzon J."/>
            <person name="Hell R."/>
            <person name="Saito K."/>
            <person name="Kopriva S."/>
        </authorList>
    </citation>
    <scope>FUNCTION</scope>
    <scope>BIOPHYSICOCHEMICAL PROPERTIES</scope>
    <scope>SUBCELLULAR LOCATION</scope>
    <scope>TISSUE SPECIFICITY</scope>
    <scope>DISRUPTION PHENOTYPE</scope>
</reference>
<reference key="11">
    <citation type="journal article" date="2010" name="FEBS Lett.">
        <title>Adenosine-5'-phosphosulfate kinase is essential for Arabidopsis viability.</title>
        <authorList>
            <person name="Mugford S.G."/>
            <person name="Matthewman C.A."/>
            <person name="Hill L."/>
            <person name="Kopriva S."/>
        </authorList>
    </citation>
    <scope>FUNCTION</scope>
    <scope>DISRUPTION PHENOTYPE</scope>
</reference>
<reference key="12">
    <citation type="journal article" date="2013" name="Phytochemistry">
        <title>Interaction of glucosinolate content of Arabidopsis thaliana mutant lines and feeding and oviposition by generalist and specialist lepidopterans.</title>
        <authorList>
            <person name="Badenes-Perez F.R."/>
            <person name="Reichelt M."/>
            <person name="Gershenzon J."/>
            <person name="Heckel D.G."/>
        </authorList>
    </citation>
    <scope>FUNCTION</scope>
</reference>
<reference key="13">
    <citation type="journal article" date="2012" name="J. Biol. Chem.">
        <title>Nucleotide binding site communication in Arabidopsis thaliana adenosine 5'-phosphosulfate kinase.</title>
        <authorList>
            <person name="Ravilious G.E."/>
            <person name="Jez J.M."/>
        </authorList>
    </citation>
    <scope>X-RAY CRYSTALLOGRAPHY (1.95 ANGSTROMS) OF 77-276 IN COMPLEX WITH SUBSTRATE</scope>
    <scope>MUTAGENESIS OF ASP-136</scope>
</reference>
<reference key="14">
    <citation type="journal article" date="2012" name="Proc. Natl. Acad. Sci. U.S.A.">
        <title>Structural basis and evolution of redox regulation in plant adenosine-5'-phosphosulfate kinase.</title>
        <authorList>
            <person name="Ravilious G.E."/>
            <person name="Nguyen A."/>
            <person name="Francois J.A."/>
            <person name="Jez J.M."/>
        </authorList>
    </citation>
    <scope>X-RAY CRYSTALLOGRAPHY (1.79 ANGSTROMS) OF 77-276 IN COMPLEX WITH SUBSTRATE AND ATP</scope>
    <scope>SUBUNIT</scope>
    <scope>DISULFIDE BONDS</scope>
    <scope>MUTAGENESIS OF CYS-86 AND CYS-119</scope>
</reference>
<name>APK1_ARATH</name>
<sequence>MIAAGAKSLLGLSMASPKGIFDSNSMSNSRSVVVVRACVSMDGSQTLSHNKNGSIPEVKSINGHTGQKQGPLSTVGNSTNIKWHECSVEKVDRQRLLDQKGCVIWVTGLSGSGKSTLACALNQMLYQKGKLCYILDGDNVRHGLNRDLSFKAEDRAENIRRVGEVAKLFADAGIICIASLISPYRTDRDACRSLLPEGDFVEVFMDVPLSVCEARDPKGLYKLARAGKIKGFTGIDDPYEPPLNCEISLGREGGTSPIEMAEKVVGYLDNKGYLQA</sequence>
<evidence type="ECO:0000250" key="1"/>
<evidence type="ECO:0000255" key="2"/>
<evidence type="ECO:0000256" key="3">
    <source>
        <dbReference type="SAM" id="MobiDB-lite"/>
    </source>
</evidence>
<evidence type="ECO:0000269" key="4">
    <source>
    </source>
</evidence>
<evidence type="ECO:0000269" key="5">
    <source>
    </source>
</evidence>
<evidence type="ECO:0000269" key="6">
    <source>
    </source>
</evidence>
<evidence type="ECO:0000269" key="7">
    <source>
    </source>
</evidence>
<evidence type="ECO:0000269" key="8">
    <source>
    </source>
</evidence>
<evidence type="ECO:0000269" key="9">
    <source>
    </source>
</evidence>
<evidence type="ECO:0000269" key="10">
    <source>
    </source>
</evidence>
<evidence type="ECO:0000303" key="11">
    <source>
    </source>
</evidence>
<evidence type="ECO:0000303" key="12">
    <source>
    </source>
</evidence>
<evidence type="ECO:0000305" key="13"/>
<evidence type="ECO:0000305" key="14">
    <source>
    </source>
</evidence>
<evidence type="ECO:0007829" key="15">
    <source>
        <dbReference type="PDB" id="3UIE"/>
    </source>
</evidence>